<organism>
    <name type="scientific">Burkholderia orbicola (strain MC0-3)</name>
    <dbReference type="NCBI Taxonomy" id="406425"/>
    <lineage>
        <taxon>Bacteria</taxon>
        <taxon>Pseudomonadati</taxon>
        <taxon>Pseudomonadota</taxon>
        <taxon>Betaproteobacteria</taxon>
        <taxon>Burkholderiales</taxon>
        <taxon>Burkholderiaceae</taxon>
        <taxon>Burkholderia</taxon>
        <taxon>Burkholderia cepacia complex</taxon>
        <taxon>Burkholderia orbicola</taxon>
    </lineage>
</organism>
<sequence>MQQQKIRIRLKAFDYRLIDQSAAEIVDTAKRTGAIVRGPVPLPTRIQRFDILRSPHVNKTSRDQLEIRTHQRLMDIVDPTDKTVDALMKLDLPAGVDVEIKLQ</sequence>
<reference key="1">
    <citation type="submission" date="2008-02" db="EMBL/GenBank/DDBJ databases">
        <title>Complete sequence of chromosome 1 of Burkholderia cenocepacia MC0-3.</title>
        <authorList>
            <person name="Copeland A."/>
            <person name="Lucas S."/>
            <person name="Lapidus A."/>
            <person name="Barry K."/>
            <person name="Bruce D."/>
            <person name="Goodwin L."/>
            <person name="Glavina del Rio T."/>
            <person name="Dalin E."/>
            <person name="Tice H."/>
            <person name="Pitluck S."/>
            <person name="Chain P."/>
            <person name="Malfatti S."/>
            <person name="Shin M."/>
            <person name="Vergez L."/>
            <person name="Schmutz J."/>
            <person name="Larimer F."/>
            <person name="Land M."/>
            <person name="Hauser L."/>
            <person name="Kyrpides N."/>
            <person name="Mikhailova N."/>
            <person name="Tiedje J."/>
            <person name="Richardson P."/>
        </authorList>
    </citation>
    <scope>NUCLEOTIDE SEQUENCE [LARGE SCALE GENOMIC DNA]</scope>
    <source>
        <strain>MC0-3</strain>
    </source>
</reference>
<dbReference type="EMBL" id="CP000958">
    <property type="protein sequence ID" value="ACA89506.1"/>
    <property type="molecule type" value="Genomic_DNA"/>
</dbReference>
<dbReference type="RefSeq" id="WP_004199280.1">
    <property type="nucleotide sequence ID" value="NC_010508.1"/>
</dbReference>
<dbReference type="SMR" id="B1JU21"/>
<dbReference type="GeneID" id="98107161"/>
<dbReference type="KEGG" id="bcm:Bcenmc03_0326"/>
<dbReference type="HOGENOM" id="CLU_122625_1_3_4"/>
<dbReference type="Proteomes" id="UP000002169">
    <property type="component" value="Chromosome 1"/>
</dbReference>
<dbReference type="GO" id="GO:1990904">
    <property type="term" value="C:ribonucleoprotein complex"/>
    <property type="evidence" value="ECO:0007669"/>
    <property type="project" value="UniProtKB-KW"/>
</dbReference>
<dbReference type="GO" id="GO:0005840">
    <property type="term" value="C:ribosome"/>
    <property type="evidence" value="ECO:0007669"/>
    <property type="project" value="UniProtKB-KW"/>
</dbReference>
<dbReference type="GO" id="GO:0003735">
    <property type="term" value="F:structural constituent of ribosome"/>
    <property type="evidence" value="ECO:0007669"/>
    <property type="project" value="InterPro"/>
</dbReference>
<dbReference type="GO" id="GO:0000049">
    <property type="term" value="F:tRNA binding"/>
    <property type="evidence" value="ECO:0007669"/>
    <property type="project" value="UniProtKB-UniRule"/>
</dbReference>
<dbReference type="GO" id="GO:0006412">
    <property type="term" value="P:translation"/>
    <property type="evidence" value="ECO:0007669"/>
    <property type="project" value="UniProtKB-UniRule"/>
</dbReference>
<dbReference type="FunFam" id="3.30.70.600:FF:000001">
    <property type="entry name" value="30S ribosomal protein S10"/>
    <property type="match status" value="1"/>
</dbReference>
<dbReference type="Gene3D" id="3.30.70.600">
    <property type="entry name" value="Ribosomal protein S10 domain"/>
    <property type="match status" value="1"/>
</dbReference>
<dbReference type="HAMAP" id="MF_00508">
    <property type="entry name" value="Ribosomal_uS10"/>
    <property type="match status" value="1"/>
</dbReference>
<dbReference type="InterPro" id="IPR001848">
    <property type="entry name" value="Ribosomal_uS10"/>
</dbReference>
<dbReference type="InterPro" id="IPR018268">
    <property type="entry name" value="Ribosomal_uS10_CS"/>
</dbReference>
<dbReference type="InterPro" id="IPR027486">
    <property type="entry name" value="Ribosomal_uS10_dom"/>
</dbReference>
<dbReference type="InterPro" id="IPR036838">
    <property type="entry name" value="Ribosomal_uS10_dom_sf"/>
</dbReference>
<dbReference type="NCBIfam" id="NF001861">
    <property type="entry name" value="PRK00596.1"/>
    <property type="match status" value="1"/>
</dbReference>
<dbReference type="NCBIfam" id="TIGR01049">
    <property type="entry name" value="rpsJ_bact"/>
    <property type="match status" value="1"/>
</dbReference>
<dbReference type="PANTHER" id="PTHR11700">
    <property type="entry name" value="30S RIBOSOMAL PROTEIN S10 FAMILY MEMBER"/>
    <property type="match status" value="1"/>
</dbReference>
<dbReference type="Pfam" id="PF00338">
    <property type="entry name" value="Ribosomal_S10"/>
    <property type="match status" value="1"/>
</dbReference>
<dbReference type="PRINTS" id="PR00971">
    <property type="entry name" value="RIBOSOMALS10"/>
</dbReference>
<dbReference type="SMART" id="SM01403">
    <property type="entry name" value="Ribosomal_S10"/>
    <property type="match status" value="1"/>
</dbReference>
<dbReference type="SUPFAM" id="SSF54999">
    <property type="entry name" value="Ribosomal protein S10"/>
    <property type="match status" value="1"/>
</dbReference>
<dbReference type="PROSITE" id="PS00361">
    <property type="entry name" value="RIBOSOMAL_S10"/>
    <property type="match status" value="1"/>
</dbReference>
<comment type="function">
    <text evidence="1">Involved in the binding of tRNA to the ribosomes.</text>
</comment>
<comment type="subunit">
    <text evidence="1">Part of the 30S ribosomal subunit.</text>
</comment>
<comment type="similarity">
    <text evidence="1">Belongs to the universal ribosomal protein uS10 family.</text>
</comment>
<accession>B1JU21</accession>
<evidence type="ECO:0000255" key="1">
    <source>
        <dbReference type="HAMAP-Rule" id="MF_00508"/>
    </source>
</evidence>
<evidence type="ECO:0000305" key="2"/>
<protein>
    <recommendedName>
        <fullName evidence="1">Small ribosomal subunit protein uS10</fullName>
    </recommendedName>
    <alternativeName>
        <fullName evidence="2">30S ribosomal protein S10</fullName>
    </alternativeName>
</protein>
<feature type="chain" id="PRO_1000127090" description="Small ribosomal subunit protein uS10">
    <location>
        <begin position="1"/>
        <end position="103"/>
    </location>
</feature>
<name>RS10_BURO0</name>
<gene>
    <name evidence="1" type="primary">rpsJ</name>
    <name type="ordered locus">Bcenmc03_0326</name>
</gene>
<proteinExistence type="inferred from homology"/>
<keyword id="KW-0687">Ribonucleoprotein</keyword>
<keyword id="KW-0689">Ribosomal protein</keyword>